<sequence>MSTESKCPFAGGAYANTEAGAKGNRDWWPKQLNLDILHQHSSLSNPLEENFDYASEFQSLDLDAVVKDLHALMTTSQDWWPADFGHYGGLFIRMAWHSAGTYRIYDGRGGASRGAQRFAPLNSWPDNVNLDKARRLLWPIKQKYGRKISWADLMILAGNVALESMGFKTFGFGGGREDIWEPEKDINWGPETTWLGDERYSGNRELANPLGAVQMGLIYVNPEGPNGNPDPLASARDIRETFARMAMNDEETVALIAGGHTFGKTHGAAPASHVGLEPEGASIEEQGLGWKNSFGTGVGKDAITSGLEVIWTPTPTQWDMSYLETLYGYEWELTKSPAGAHQWKPKGDAGAGTVPDAFDAKKRHQPSMLTSDIALRTDPAYDKICRDFMAHPDKYADAFARAWYKLTHRDMGPITRYLGPLVPKEELIWQDPVPAVDHELVNDADVEALKAEVLASGLTIPQLVSTAWAAASSFRGSDRRGGANGARIRLEPQKNWEANQPAELAKVLAKLEGIQQKFNGAQQGGKKISLADLIVLAGNAGVEAAAKKAGHDVKVPFAPGRTDATQEQTDAPTFAPLEPKADGFRNYAKKGLEDAAAYLLIDKAQLLTLTAPEMTVLVGGLRALGANYGQSKHGVFTSRPETLTNDFFVNLLDMNTAWAKSEKAAGEFEGRDRKTGQIKWTASIVDLVFGSNSQLRALAEVYATSDSTEAFVKDFVAAWTKVMNLDRFDLKK</sequence>
<protein>
    <recommendedName>
        <fullName evidence="1">Catalase-peroxidase</fullName>
        <shortName evidence="1">CP</shortName>
        <ecNumber evidence="1">1.11.1.21</ecNumber>
    </recommendedName>
    <alternativeName>
        <fullName evidence="1">Peroxidase/catalase</fullName>
    </alternativeName>
</protein>
<proteinExistence type="inferred from homology"/>
<reference key="1">
    <citation type="journal article" date="2009" name="Appl. Environ. Microbiol.">
        <title>Three genomes from the phylum Acidobacteria provide insight into the lifestyles of these microorganisms in soils.</title>
        <authorList>
            <person name="Ward N.L."/>
            <person name="Challacombe J.F."/>
            <person name="Janssen P.H."/>
            <person name="Henrissat B."/>
            <person name="Coutinho P.M."/>
            <person name="Wu M."/>
            <person name="Xie G."/>
            <person name="Haft D.H."/>
            <person name="Sait M."/>
            <person name="Badger J."/>
            <person name="Barabote R.D."/>
            <person name="Bradley B."/>
            <person name="Brettin T.S."/>
            <person name="Brinkac L.M."/>
            <person name="Bruce D."/>
            <person name="Creasy T."/>
            <person name="Daugherty S.C."/>
            <person name="Davidsen T.M."/>
            <person name="DeBoy R.T."/>
            <person name="Detter J.C."/>
            <person name="Dodson R.J."/>
            <person name="Durkin A.S."/>
            <person name="Ganapathy A."/>
            <person name="Gwinn-Giglio M."/>
            <person name="Han C.S."/>
            <person name="Khouri H."/>
            <person name="Kiss H."/>
            <person name="Kothari S.P."/>
            <person name="Madupu R."/>
            <person name="Nelson K.E."/>
            <person name="Nelson W.C."/>
            <person name="Paulsen I."/>
            <person name="Penn K."/>
            <person name="Ren Q."/>
            <person name="Rosovitz M.J."/>
            <person name="Selengut J.D."/>
            <person name="Shrivastava S."/>
            <person name="Sullivan S.A."/>
            <person name="Tapia R."/>
            <person name="Thompson L.S."/>
            <person name="Watkins K.L."/>
            <person name="Yang Q."/>
            <person name="Yu C."/>
            <person name="Zafar N."/>
            <person name="Zhou L."/>
            <person name="Kuske C.R."/>
        </authorList>
    </citation>
    <scope>NUCLEOTIDE SEQUENCE [LARGE SCALE GENOMIC DNA]</scope>
    <source>
        <strain>ATCC 51196 / DSM 11244 / BCRC 80197 / JCM 7670 / NBRC 15755 / NCIMB 13165 / 161</strain>
    </source>
</reference>
<name>KATG_ACIC5</name>
<evidence type="ECO:0000255" key="1">
    <source>
        <dbReference type="HAMAP-Rule" id="MF_01961"/>
    </source>
</evidence>
<accession>C1F960</accession>
<organism>
    <name type="scientific">Acidobacterium capsulatum (strain ATCC 51196 / DSM 11244 / BCRC 80197 / JCM 7670 / NBRC 15755 / NCIMB 13165 / 161)</name>
    <dbReference type="NCBI Taxonomy" id="240015"/>
    <lineage>
        <taxon>Bacteria</taxon>
        <taxon>Pseudomonadati</taxon>
        <taxon>Acidobacteriota</taxon>
        <taxon>Terriglobia</taxon>
        <taxon>Terriglobales</taxon>
        <taxon>Acidobacteriaceae</taxon>
        <taxon>Acidobacterium</taxon>
    </lineage>
</organism>
<feature type="signal peptide" evidence="1">
    <location>
        <begin position="1"/>
        <end position="15"/>
    </location>
</feature>
<feature type="chain" id="PRO_1000189068" description="Catalase-peroxidase">
    <location>
        <begin position="16"/>
        <end position="732"/>
    </location>
</feature>
<feature type="active site" description="Proton acceptor" evidence="1">
    <location>
        <position position="97"/>
    </location>
</feature>
<feature type="binding site" description="axial binding residue" evidence="1">
    <location>
        <position position="260"/>
    </location>
    <ligand>
        <name>heme b</name>
        <dbReference type="ChEBI" id="CHEBI:60344"/>
    </ligand>
    <ligandPart>
        <name>Fe</name>
        <dbReference type="ChEBI" id="CHEBI:18248"/>
    </ligandPart>
</feature>
<feature type="site" description="Transition state stabilizer" evidence="1">
    <location>
        <position position="93"/>
    </location>
</feature>
<feature type="cross-link" description="Tryptophyl-tyrosyl-methioninium (Trp-Tyr) (with M-245)" evidence="1">
    <location>
        <begin position="96"/>
        <end position="219"/>
    </location>
</feature>
<feature type="cross-link" description="Tryptophyl-tyrosyl-methioninium (Tyr-Met) (with W-96)" evidence="1">
    <location>
        <begin position="219"/>
        <end position="245"/>
    </location>
</feature>
<comment type="function">
    <text evidence="1">Bifunctional enzyme with both catalase and broad-spectrum peroxidase activity.</text>
</comment>
<comment type="catalytic activity">
    <reaction evidence="1">
        <text>H2O2 + AH2 = A + 2 H2O</text>
        <dbReference type="Rhea" id="RHEA:30275"/>
        <dbReference type="ChEBI" id="CHEBI:13193"/>
        <dbReference type="ChEBI" id="CHEBI:15377"/>
        <dbReference type="ChEBI" id="CHEBI:16240"/>
        <dbReference type="ChEBI" id="CHEBI:17499"/>
        <dbReference type="EC" id="1.11.1.21"/>
    </reaction>
</comment>
<comment type="catalytic activity">
    <reaction evidence="1">
        <text>2 H2O2 = O2 + 2 H2O</text>
        <dbReference type="Rhea" id="RHEA:20309"/>
        <dbReference type="ChEBI" id="CHEBI:15377"/>
        <dbReference type="ChEBI" id="CHEBI:15379"/>
        <dbReference type="ChEBI" id="CHEBI:16240"/>
        <dbReference type="EC" id="1.11.1.21"/>
    </reaction>
</comment>
<comment type="cofactor">
    <cofactor evidence="1">
        <name>heme b</name>
        <dbReference type="ChEBI" id="CHEBI:60344"/>
    </cofactor>
    <text evidence="1">Binds 1 heme b (iron(II)-protoporphyrin IX) group per dimer.</text>
</comment>
<comment type="subunit">
    <text evidence="1">Homodimer or homotetramer.</text>
</comment>
<comment type="PTM">
    <text evidence="1">Formation of the three residue Trp-Tyr-Met cross-link is important for the catalase, but not the peroxidase activity of the enzyme.</text>
</comment>
<comment type="similarity">
    <text evidence="1">Belongs to the peroxidase family. Peroxidase/catalase subfamily.</text>
</comment>
<dbReference type="EC" id="1.11.1.21" evidence="1"/>
<dbReference type="EMBL" id="CP001472">
    <property type="protein sequence ID" value="ACO32804.1"/>
    <property type="molecule type" value="Genomic_DNA"/>
</dbReference>
<dbReference type="RefSeq" id="WP_012680615.1">
    <property type="nucleotide sequence ID" value="NC_012483.1"/>
</dbReference>
<dbReference type="SMR" id="C1F960"/>
<dbReference type="FunCoup" id="C1F960">
    <property type="interactions" value="239"/>
</dbReference>
<dbReference type="STRING" id="240015.ACP_0213"/>
<dbReference type="KEGG" id="aca:ACP_0213"/>
<dbReference type="eggNOG" id="COG0376">
    <property type="taxonomic scope" value="Bacteria"/>
</dbReference>
<dbReference type="HOGENOM" id="CLU_025424_2_0_0"/>
<dbReference type="InParanoid" id="C1F960"/>
<dbReference type="OrthoDB" id="9759743at2"/>
<dbReference type="Proteomes" id="UP000002207">
    <property type="component" value="Chromosome"/>
</dbReference>
<dbReference type="GO" id="GO:0005829">
    <property type="term" value="C:cytosol"/>
    <property type="evidence" value="ECO:0007669"/>
    <property type="project" value="TreeGrafter"/>
</dbReference>
<dbReference type="GO" id="GO:0004096">
    <property type="term" value="F:catalase activity"/>
    <property type="evidence" value="ECO:0007669"/>
    <property type="project" value="UniProtKB-UniRule"/>
</dbReference>
<dbReference type="GO" id="GO:0020037">
    <property type="term" value="F:heme binding"/>
    <property type="evidence" value="ECO:0007669"/>
    <property type="project" value="InterPro"/>
</dbReference>
<dbReference type="GO" id="GO:0046872">
    <property type="term" value="F:metal ion binding"/>
    <property type="evidence" value="ECO:0007669"/>
    <property type="project" value="UniProtKB-KW"/>
</dbReference>
<dbReference type="GO" id="GO:0070301">
    <property type="term" value="P:cellular response to hydrogen peroxide"/>
    <property type="evidence" value="ECO:0007669"/>
    <property type="project" value="TreeGrafter"/>
</dbReference>
<dbReference type="GO" id="GO:0042744">
    <property type="term" value="P:hydrogen peroxide catabolic process"/>
    <property type="evidence" value="ECO:0007669"/>
    <property type="project" value="UniProtKB-KW"/>
</dbReference>
<dbReference type="CDD" id="cd00649">
    <property type="entry name" value="catalase_peroxidase_1"/>
    <property type="match status" value="1"/>
</dbReference>
<dbReference type="CDD" id="cd08200">
    <property type="entry name" value="catalase_peroxidase_2"/>
    <property type="match status" value="1"/>
</dbReference>
<dbReference type="FunFam" id="1.10.420.10:FF:000002">
    <property type="entry name" value="Catalase-peroxidase"/>
    <property type="match status" value="1"/>
</dbReference>
<dbReference type="FunFam" id="1.10.420.10:FF:000004">
    <property type="entry name" value="Catalase-peroxidase"/>
    <property type="match status" value="1"/>
</dbReference>
<dbReference type="FunFam" id="1.10.520.10:FF:000002">
    <property type="entry name" value="Catalase-peroxidase"/>
    <property type="match status" value="1"/>
</dbReference>
<dbReference type="Gene3D" id="1.10.520.10">
    <property type="match status" value="2"/>
</dbReference>
<dbReference type="Gene3D" id="1.10.420.10">
    <property type="entry name" value="Peroxidase, domain 2"/>
    <property type="match status" value="2"/>
</dbReference>
<dbReference type="HAMAP" id="MF_01961">
    <property type="entry name" value="Catal_peroxid"/>
    <property type="match status" value="1"/>
</dbReference>
<dbReference type="InterPro" id="IPR000763">
    <property type="entry name" value="Catalase_peroxidase"/>
</dbReference>
<dbReference type="InterPro" id="IPR002016">
    <property type="entry name" value="Haem_peroxidase"/>
</dbReference>
<dbReference type="InterPro" id="IPR010255">
    <property type="entry name" value="Haem_peroxidase_sf"/>
</dbReference>
<dbReference type="InterPro" id="IPR019794">
    <property type="entry name" value="Peroxidases_AS"/>
</dbReference>
<dbReference type="InterPro" id="IPR019793">
    <property type="entry name" value="Peroxidases_heam-ligand_BS"/>
</dbReference>
<dbReference type="NCBIfam" id="TIGR00198">
    <property type="entry name" value="cat_per_HPI"/>
    <property type="match status" value="1"/>
</dbReference>
<dbReference type="NCBIfam" id="NF011635">
    <property type="entry name" value="PRK15061.1"/>
    <property type="match status" value="1"/>
</dbReference>
<dbReference type="PANTHER" id="PTHR30555:SF0">
    <property type="entry name" value="CATALASE-PEROXIDASE"/>
    <property type="match status" value="1"/>
</dbReference>
<dbReference type="PANTHER" id="PTHR30555">
    <property type="entry name" value="HYDROPEROXIDASE I, BIFUNCTIONAL CATALASE-PEROXIDASE"/>
    <property type="match status" value="1"/>
</dbReference>
<dbReference type="Pfam" id="PF00141">
    <property type="entry name" value="peroxidase"/>
    <property type="match status" value="2"/>
</dbReference>
<dbReference type="PRINTS" id="PR00460">
    <property type="entry name" value="BPEROXIDASE"/>
</dbReference>
<dbReference type="PRINTS" id="PR00458">
    <property type="entry name" value="PEROXIDASE"/>
</dbReference>
<dbReference type="SUPFAM" id="SSF48113">
    <property type="entry name" value="Heme-dependent peroxidases"/>
    <property type="match status" value="2"/>
</dbReference>
<dbReference type="PROSITE" id="PS00435">
    <property type="entry name" value="PEROXIDASE_1"/>
    <property type="match status" value="1"/>
</dbReference>
<dbReference type="PROSITE" id="PS00436">
    <property type="entry name" value="PEROXIDASE_2"/>
    <property type="match status" value="1"/>
</dbReference>
<dbReference type="PROSITE" id="PS50873">
    <property type="entry name" value="PEROXIDASE_4"/>
    <property type="match status" value="1"/>
</dbReference>
<gene>
    <name evidence="1" type="primary">katG</name>
    <name type="ordered locus">ACP_0213</name>
</gene>
<keyword id="KW-0349">Heme</keyword>
<keyword id="KW-0376">Hydrogen peroxide</keyword>
<keyword id="KW-0408">Iron</keyword>
<keyword id="KW-0479">Metal-binding</keyword>
<keyword id="KW-0560">Oxidoreductase</keyword>
<keyword id="KW-0575">Peroxidase</keyword>
<keyword id="KW-1185">Reference proteome</keyword>
<keyword id="KW-0732">Signal</keyword>